<comment type="function">
    <text evidence="1">This protein is located at the 30S-50S ribosomal subunit interface and may play a role in the structure and function of the aminoacyl-tRNA binding site.</text>
</comment>
<comment type="similarity">
    <text evidence="1">Belongs to the bacterial ribosomal protein bL19 family.</text>
</comment>
<feature type="chain" id="PRO_1000049755" description="Large ribosomal subunit protein bL19">
    <location>
        <begin position="1"/>
        <end position="115"/>
    </location>
</feature>
<name>RL19_STRSY</name>
<sequence length="115" mass="13143">MNPLIQSLTEGQLRTDIPSFRPGDTVRVHAKVVEGNRERIQIFEGVVISRKGQGISEMYTVRKISGGVGVERTFPIHTPRVDKIEVVRYGKVRRAKLYYLRALQGKAARIKEIRR</sequence>
<protein>
    <recommendedName>
        <fullName evidence="1">Large ribosomal subunit protein bL19</fullName>
    </recommendedName>
    <alternativeName>
        <fullName evidence="2">50S ribosomal protein L19</fullName>
    </alternativeName>
</protein>
<dbReference type="EMBL" id="CP000407">
    <property type="protein sequence ID" value="ABP89319.1"/>
    <property type="molecule type" value="Genomic_DNA"/>
</dbReference>
<dbReference type="SMR" id="A4VT80"/>
<dbReference type="STRING" id="391295.SSU05_0352"/>
<dbReference type="KEGG" id="ssu:SSU05_0352"/>
<dbReference type="eggNOG" id="COG0335">
    <property type="taxonomic scope" value="Bacteria"/>
</dbReference>
<dbReference type="HOGENOM" id="CLU_103507_2_1_9"/>
<dbReference type="GO" id="GO:0022625">
    <property type="term" value="C:cytosolic large ribosomal subunit"/>
    <property type="evidence" value="ECO:0007669"/>
    <property type="project" value="TreeGrafter"/>
</dbReference>
<dbReference type="GO" id="GO:0003735">
    <property type="term" value="F:structural constituent of ribosome"/>
    <property type="evidence" value="ECO:0007669"/>
    <property type="project" value="InterPro"/>
</dbReference>
<dbReference type="GO" id="GO:0006412">
    <property type="term" value="P:translation"/>
    <property type="evidence" value="ECO:0007669"/>
    <property type="project" value="UniProtKB-UniRule"/>
</dbReference>
<dbReference type="FunFam" id="2.30.30.790:FF:000001">
    <property type="entry name" value="50S ribosomal protein L19"/>
    <property type="match status" value="1"/>
</dbReference>
<dbReference type="Gene3D" id="2.30.30.790">
    <property type="match status" value="1"/>
</dbReference>
<dbReference type="HAMAP" id="MF_00402">
    <property type="entry name" value="Ribosomal_bL19"/>
    <property type="match status" value="1"/>
</dbReference>
<dbReference type="InterPro" id="IPR001857">
    <property type="entry name" value="Ribosomal_bL19"/>
</dbReference>
<dbReference type="InterPro" id="IPR018257">
    <property type="entry name" value="Ribosomal_bL19_CS"/>
</dbReference>
<dbReference type="InterPro" id="IPR038657">
    <property type="entry name" value="Ribosomal_bL19_sf"/>
</dbReference>
<dbReference type="InterPro" id="IPR008991">
    <property type="entry name" value="Translation_prot_SH3-like_sf"/>
</dbReference>
<dbReference type="NCBIfam" id="TIGR01024">
    <property type="entry name" value="rplS_bact"/>
    <property type="match status" value="1"/>
</dbReference>
<dbReference type="PANTHER" id="PTHR15680:SF9">
    <property type="entry name" value="LARGE RIBOSOMAL SUBUNIT PROTEIN BL19M"/>
    <property type="match status" value="1"/>
</dbReference>
<dbReference type="PANTHER" id="PTHR15680">
    <property type="entry name" value="RIBOSOMAL PROTEIN L19"/>
    <property type="match status" value="1"/>
</dbReference>
<dbReference type="Pfam" id="PF01245">
    <property type="entry name" value="Ribosomal_L19"/>
    <property type="match status" value="1"/>
</dbReference>
<dbReference type="PIRSF" id="PIRSF002191">
    <property type="entry name" value="Ribosomal_L19"/>
    <property type="match status" value="1"/>
</dbReference>
<dbReference type="PRINTS" id="PR00061">
    <property type="entry name" value="RIBOSOMALL19"/>
</dbReference>
<dbReference type="SUPFAM" id="SSF50104">
    <property type="entry name" value="Translation proteins SH3-like domain"/>
    <property type="match status" value="1"/>
</dbReference>
<dbReference type="PROSITE" id="PS01015">
    <property type="entry name" value="RIBOSOMAL_L19"/>
    <property type="match status" value="1"/>
</dbReference>
<accession>A4VT80</accession>
<keyword id="KW-0687">Ribonucleoprotein</keyword>
<keyword id="KW-0689">Ribosomal protein</keyword>
<evidence type="ECO:0000255" key="1">
    <source>
        <dbReference type="HAMAP-Rule" id="MF_00402"/>
    </source>
</evidence>
<evidence type="ECO:0000305" key="2"/>
<gene>
    <name evidence="1" type="primary">rplS</name>
    <name type="ordered locus">SSU05_0352</name>
</gene>
<proteinExistence type="inferred from homology"/>
<organism>
    <name type="scientific">Streptococcus suis (strain 05ZYH33)</name>
    <dbReference type="NCBI Taxonomy" id="391295"/>
    <lineage>
        <taxon>Bacteria</taxon>
        <taxon>Bacillati</taxon>
        <taxon>Bacillota</taxon>
        <taxon>Bacilli</taxon>
        <taxon>Lactobacillales</taxon>
        <taxon>Streptococcaceae</taxon>
        <taxon>Streptococcus</taxon>
    </lineage>
</organism>
<reference key="1">
    <citation type="journal article" date="2007" name="PLoS ONE">
        <title>A glimpse of streptococcal toxic shock syndrome from comparative genomics of S. suis 2 Chinese isolates.</title>
        <authorList>
            <person name="Chen C."/>
            <person name="Tang J."/>
            <person name="Dong W."/>
            <person name="Wang C."/>
            <person name="Feng Y."/>
            <person name="Wang J."/>
            <person name="Zheng F."/>
            <person name="Pan X."/>
            <person name="Liu D."/>
            <person name="Li M."/>
            <person name="Song Y."/>
            <person name="Zhu X."/>
            <person name="Sun H."/>
            <person name="Feng T."/>
            <person name="Guo Z."/>
            <person name="Ju A."/>
            <person name="Ge J."/>
            <person name="Dong Y."/>
            <person name="Sun W."/>
            <person name="Jiang Y."/>
            <person name="Wang J."/>
            <person name="Yan J."/>
            <person name="Yang H."/>
            <person name="Wang X."/>
            <person name="Gao G.F."/>
            <person name="Yang R."/>
            <person name="Wang J."/>
            <person name="Yu J."/>
        </authorList>
    </citation>
    <scope>NUCLEOTIDE SEQUENCE [LARGE SCALE GENOMIC DNA]</scope>
    <source>
        <strain>05ZYH33</strain>
    </source>
</reference>